<sequence length="206" mass="23063">MSDPRQQLIALGAVFESAALVDKLARTGQISEAPLGCMLGSLLARNPASTLDVYGGDSLNLRDGFKALASALERKPGSLQREPLRYALAMLTLERQLDKRGDMLDLIGQRLDQVEQQVQHFGLVHENVIASFASIYQDTLSTFRQRIQVHGDMRHLQVSSNAARIRALLLAGIRSARLWRQLGGSRWQMVFSRRRLLNELYPLLRG</sequence>
<dbReference type="EMBL" id="CP000438">
    <property type="protein sequence ID" value="ABJ11850.1"/>
    <property type="molecule type" value="Genomic_DNA"/>
</dbReference>
<dbReference type="RefSeq" id="WP_003090440.1">
    <property type="nucleotide sequence ID" value="NZ_CP034244.1"/>
</dbReference>
<dbReference type="SMR" id="Q02NB9"/>
<dbReference type="KEGG" id="pau:PA14_30140"/>
<dbReference type="PseudoCAP" id="PA14_30140"/>
<dbReference type="HOGENOM" id="CLU_098920_0_0_6"/>
<dbReference type="BioCyc" id="PAER208963:G1G74-2524-MONOMER"/>
<dbReference type="Proteomes" id="UP000000653">
    <property type="component" value="Chromosome"/>
</dbReference>
<dbReference type="GO" id="GO:0005737">
    <property type="term" value="C:cytoplasm"/>
    <property type="evidence" value="ECO:0007669"/>
    <property type="project" value="UniProtKB-SubCell"/>
</dbReference>
<dbReference type="GO" id="GO:0005886">
    <property type="term" value="C:plasma membrane"/>
    <property type="evidence" value="ECO:0007669"/>
    <property type="project" value="UniProtKB-SubCell"/>
</dbReference>
<dbReference type="FunFam" id="1.10.3890.10:FF:000003">
    <property type="entry name" value="High frequency lysogenization protein HflD homolog"/>
    <property type="match status" value="1"/>
</dbReference>
<dbReference type="Gene3D" id="1.10.3890.10">
    <property type="entry name" value="HflD-like"/>
    <property type="match status" value="1"/>
</dbReference>
<dbReference type="HAMAP" id="MF_00695">
    <property type="entry name" value="HflD_protein"/>
    <property type="match status" value="1"/>
</dbReference>
<dbReference type="InterPro" id="IPR007451">
    <property type="entry name" value="HflD"/>
</dbReference>
<dbReference type="InterPro" id="IPR035932">
    <property type="entry name" value="HflD-like_sf"/>
</dbReference>
<dbReference type="NCBIfam" id="NF001246">
    <property type="entry name" value="PRK00218.1-2"/>
    <property type="match status" value="1"/>
</dbReference>
<dbReference type="NCBIfam" id="NF001247">
    <property type="entry name" value="PRK00218.1-3"/>
    <property type="match status" value="1"/>
</dbReference>
<dbReference type="PANTHER" id="PTHR38100">
    <property type="entry name" value="HIGH FREQUENCY LYSOGENIZATION PROTEIN HFLD"/>
    <property type="match status" value="1"/>
</dbReference>
<dbReference type="PANTHER" id="PTHR38100:SF1">
    <property type="entry name" value="HIGH FREQUENCY LYSOGENIZATION PROTEIN HFLD"/>
    <property type="match status" value="1"/>
</dbReference>
<dbReference type="Pfam" id="PF04356">
    <property type="entry name" value="DUF489"/>
    <property type="match status" value="1"/>
</dbReference>
<dbReference type="SUPFAM" id="SSF101322">
    <property type="entry name" value="YcfC-like"/>
    <property type="match status" value="1"/>
</dbReference>
<keyword id="KW-0997">Cell inner membrane</keyword>
<keyword id="KW-1003">Cell membrane</keyword>
<keyword id="KW-0963">Cytoplasm</keyword>
<keyword id="KW-0472">Membrane</keyword>
<feature type="chain" id="PRO_1000045429" description="High frequency lysogenization protein HflD homolog">
    <location>
        <begin position="1"/>
        <end position="206"/>
    </location>
</feature>
<accession>Q02NB9</accession>
<evidence type="ECO:0000255" key="1">
    <source>
        <dbReference type="HAMAP-Rule" id="MF_00695"/>
    </source>
</evidence>
<reference key="1">
    <citation type="journal article" date="2006" name="Genome Biol.">
        <title>Genomic analysis reveals that Pseudomonas aeruginosa virulence is combinatorial.</title>
        <authorList>
            <person name="Lee D.G."/>
            <person name="Urbach J.M."/>
            <person name="Wu G."/>
            <person name="Liberati N.T."/>
            <person name="Feinbaum R.L."/>
            <person name="Miyata S."/>
            <person name="Diggins L.T."/>
            <person name="He J."/>
            <person name="Saucier M."/>
            <person name="Deziel E."/>
            <person name="Friedman L."/>
            <person name="Li L."/>
            <person name="Grills G."/>
            <person name="Montgomery K."/>
            <person name="Kucherlapati R."/>
            <person name="Rahme L.G."/>
            <person name="Ausubel F.M."/>
        </authorList>
    </citation>
    <scope>NUCLEOTIDE SEQUENCE [LARGE SCALE GENOMIC DNA]</scope>
    <source>
        <strain>UCBPP-PA14</strain>
    </source>
</reference>
<organism>
    <name type="scientific">Pseudomonas aeruginosa (strain UCBPP-PA14)</name>
    <dbReference type="NCBI Taxonomy" id="208963"/>
    <lineage>
        <taxon>Bacteria</taxon>
        <taxon>Pseudomonadati</taxon>
        <taxon>Pseudomonadota</taxon>
        <taxon>Gammaproteobacteria</taxon>
        <taxon>Pseudomonadales</taxon>
        <taxon>Pseudomonadaceae</taxon>
        <taxon>Pseudomonas</taxon>
    </lineage>
</organism>
<gene>
    <name evidence="1" type="primary">hflD</name>
    <name type="ordered locus">PA14_30140</name>
</gene>
<proteinExistence type="inferred from homology"/>
<name>HFLD_PSEAB</name>
<protein>
    <recommendedName>
        <fullName evidence="1">High frequency lysogenization protein HflD homolog</fullName>
    </recommendedName>
</protein>
<comment type="subcellular location">
    <subcellularLocation>
        <location>Cytoplasm</location>
    </subcellularLocation>
    <subcellularLocation>
        <location evidence="1">Cell inner membrane</location>
        <topology evidence="1">Peripheral membrane protein</topology>
        <orientation evidence="1">Cytoplasmic side</orientation>
    </subcellularLocation>
</comment>
<comment type="similarity">
    <text evidence="1">Belongs to the HflD family.</text>
</comment>